<sequence>MTKHQFKLSDPRLLSRIGYQFKQPELLQLALTHRSVSHKYNYERLEFLGDSLLGMIIANYLYHAYPHENEGRLTRMRATLVRQEALGKIATDLQLSRCLILSTGELKSGGHHRESILADTVEAIIGAIYLDSSDLNLLKDIVLKWYTPYLDHIEPTDQLKDPKSRLQEYLQARKKPLPVYEVVDIQGDAPHQHFKVECLVDGLSKIHGEGSSRRFAEQAAAAEILKLLEQ</sequence>
<evidence type="ECO:0000255" key="1">
    <source>
        <dbReference type="HAMAP-Rule" id="MF_00104"/>
    </source>
</evidence>
<feature type="chain" id="PRO_1000094092" description="Ribonuclease 3">
    <location>
        <begin position="1"/>
        <end position="230"/>
    </location>
</feature>
<feature type="domain" description="RNase III" evidence="1">
    <location>
        <begin position="10"/>
        <end position="133"/>
    </location>
</feature>
<feature type="domain" description="DRBM" evidence="1">
    <location>
        <begin position="161"/>
        <end position="230"/>
    </location>
</feature>
<feature type="active site" evidence="1">
    <location>
        <position position="50"/>
    </location>
</feature>
<feature type="active site" evidence="1">
    <location>
        <position position="122"/>
    </location>
</feature>
<feature type="binding site" evidence="1">
    <location>
        <position position="46"/>
    </location>
    <ligand>
        <name>Mg(2+)</name>
        <dbReference type="ChEBI" id="CHEBI:18420"/>
    </ligand>
</feature>
<feature type="binding site" evidence="1">
    <location>
        <position position="119"/>
    </location>
    <ligand>
        <name>Mg(2+)</name>
        <dbReference type="ChEBI" id="CHEBI:18420"/>
    </ligand>
</feature>
<feature type="binding site" evidence="1">
    <location>
        <position position="122"/>
    </location>
    <ligand>
        <name>Mg(2+)</name>
        <dbReference type="ChEBI" id="CHEBI:18420"/>
    </ligand>
</feature>
<accession>A3M7P2</accession>
<reference key="1">
    <citation type="journal article" date="2007" name="Genes Dev.">
        <title>New insights into Acinetobacter baumannii pathogenesis revealed by high-density pyrosequencing and transposon mutagenesis.</title>
        <authorList>
            <person name="Smith M.G."/>
            <person name="Gianoulis T.A."/>
            <person name="Pukatzki S."/>
            <person name="Mekalanos J.J."/>
            <person name="Ornston L.N."/>
            <person name="Gerstein M."/>
            <person name="Snyder M."/>
        </authorList>
    </citation>
    <scope>NUCLEOTIDE SEQUENCE [LARGE SCALE GENOMIC DNA]</scope>
    <source>
        <strain>ATCC 17978 / DSM 105126 / CIP 53.77 / LMG 1025 / NCDC KC755 / 5377</strain>
    </source>
</reference>
<name>RNC_ACIBT</name>
<organism>
    <name type="scientific">Acinetobacter baumannii (strain ATCC 17978 / DSM 105126 / CIP 53.77 / LMG 1025 / NCDC KC755 / 5377)</name>
    <dbReference type="NCBI Taxonomy" id="400667"/>
    <lineage>
        <taxon>Bacteria</taxon>
        <taxon>Pseudomonadati</taxon>
        <taxon>Pseudomonadota</taxon>
        <taxon>Gammaproteobacteria</taxon>
        <taxon>Moraxellales</taxon>
        <taxon>Moraxellaceae</taxon>
        <taxon>Acinetobacter</taxon>
        <taxon>Acinetobacter calcoaceticus/baumannii complex</taxon>
    </lineage>
</organism>
<proteinExistence type="inferred from homology"/>
<protein>
    <recommendedName>
        <fullName evidence="1">Ribonuclease 3</fullName>
        <ecNumber evidence="1">3.1.26.3</ecNumber>
    </recommendedName>
    <alternativeName>
        <fullName evidence="1">Ribonuclease III</fullName>
        <shortName evidence="1">RNase III</shortName>
    </alternativeName>
</protein>
<keyword id="KW-0963">Cytoplasm</keyword>
<keyword id="KW-0255">Endonuclease</keyword>
<keyword id="KW-0378">Hydrolase</keyword>
<keyword id="KW-0460">Magnesium</keyword>
<keyword id="KW-0479">Metal-binding</keyword>
<keyword id="KW-0507">mRNA processing</keyword>
<keyword id="KW-0540">Nuclease</keyword>
<keyword id="KW-0694">RNA-binding</keyword>
<keyword id="KW-0698">rRNA processing</keyword>
<keyword id="KW-0699">rRNA-binding</keyword>
<keyword id="KW-0819">tRNA processing</keyword>
<gene>
    <name evidence="1" type="primary">rnc</name>
    <name type="ordered locus">A1S_2519</name>
</gene>
<comment type="function">
    <text evidence="1">Digests double-stranded RNA. Involved in the processing of primary rRNA transcript to yield the immediate precursors to the large and small rRNAs (23S and 16S). Processes some mRNAs, and tRNAs when they are encoded in the rRNA operon. Processes pre-crRNA and tracrRNA of type II CRISPR loci if present in the organism.</text>
</comment>
<comment type="catalytic activity">
    <reaction evidence="1">
        <text>Endonucleolytic cleavage to 5'-phosphomonoester.</text>
        <dbReference type="EC" id="3.1.26.3"/>
    </reaction>
</comment>
<comment type="cofactor">
    <cofactor evidence="1">
        <name>Mg(2+)</name>
        <dbReference type="ChEBI" id="CHEBI:18420"/>
    </cofactor>
</comment>
<comment type="subunit">
    <text evidence="1">Homodimer.</text>
</comment>
<comment type="subcellular location">
    <subcellularLocation>
        <location evidence="1">Cytoplasm</location>
    </subcellularLocation>
</comment>
<comment type="similarity">
    <text evidence="1">Belongs to the ribonuclease III family.</text>
</comment>
<dbReference type="EC" id="3.1.26.3" evidence="1"/>
<dbReference type="EMBL" id="CP000521">
    <property type="protein sequence ID" value="ABO12936.2"/>
    <property type="molecule type" value="Genomic_DNA"/>
</dbReference>
<dbReference type="RefSeq" id="WP_000160699.1">
    <property type="nucleotide sequence ID" value="NZ_CP053098.1"/>
</dbReference>
<dbReference type="SMR" id="A3M7P2"/>
<dbReference type="GeneID" id="92894829"/>
<dbReference type="KEGG" id="acb:A1S_2519"/>
<dbReference type="HOGENOM" id="CLU_000907_1_1_6"/>
<dbReference type="GO" id="GO:0005737">
    <property type="term" value="C:cytoplasm"/>
    <property type="evidence" value="ECO:0007669"/>
    <property type="project" value="UniProtKB-SubCell"/>
</dbReference>
<dbReference type="GO" id="GO:0046872">
    <property type="term" value="F:metal ion binding"/>
    <property type="evidence" value="ECO:0007669"/>
    <property type="project" value="UniProtKB-KW"/>
</dbReference>
<dbReference type="GO" id="GO:0004525">
    <property type="term" value="F:ribonuclease III activity"/>
    <property type="evidence" value="ECO:0007669"/>
    <property type="project" value="UniProtKB-UniRule"/>
</dbReference>
<dbReference type="GO" id="GO:0019843">
    <property type="term" value="F:rRNA binding"/>
    <property type="evidence" value="ECO:0007669"/>
    <property type="project" value="UniProtKB-KW"/>
</dbReference>
<dbReference type="GO" id="GO:0006397">
    <property type="term" value="P:mRNA processing"/>
    <property type="evidence" value="ECO:0007669"/>
    <property type="project" value="UniProtKB-UniRule"/>
</dbReference>
<dbReference type="GO" id="GO:0006364">
    <property type="term" value="P:rRNA processing"/>
    <property type="evidence" value="ECO:0007669"/>
    <property type="project" value="UniProtKB-UniRule"/>
</dbReference>
<dbReference type="GO" id="GO:0008033">
    <property type="term" value="P:tRNA processing"/>
    <property type="evidence" value="ECO:0007669"/>
    <property type="project" value="UniProtKB-KW"/>
</dbReference>
<dbReference type="CDD" id="cd10845">
    <property type="entry name" value="DSRM_RNAse_III_family"/>
    <property type="match status" value="1"/>
</dbReference>
<dbReference type="CDD" id="cd00593">
    <property type="entry name" value="RIBOc"/>
    <property type="match status" value="1"/>
</dbReference>
<dbReference type="FunFam" id="1.10.1520.10:FF:000001">
    <property type="entry name" value="Ribonuclease 3"/>
    <property type="match status" value="1"/>
</dbReference>
<dbReference type="FunFam" id="3.30.160.20:FF:000003">
    <property type="entry name" value="Ribonuclease 3"/>
    <property type="match status" value="1"/>
</dbReference>
<dbReference type="Gene3D" id="3.30.160.20">
    <property type="match status" value="1"/>
</dbReference>
<dbReference type="Gene3D" id="1.10.1520.10">
    <property type="entry name" value="Ribonuclease III domain"/>
    <property type="match status" value="1"/>
</dbReference>
<dbReference type="HAMAP" id="MF_00104">
    <property type="entry name" value="RNase_III"/>
    <property type="match status" value="1"/>
</dbReference>
<dbReference type="InterPro" id="IPR014720">
    <property type="entry name" value="dsRBD_dom"/>
</dbReference>
<dbReference type="InterPro" id="IPR011907">
    <property type="entry name" value="RNase_III"/>
</dbReference>
<dbReference type="InterPro" id="IPR000999">
    <property type="entry name" value="RNase_III_dom"/>
</dbReference>
<dbReference type="InterPro" id="IPR036389">
    <property type="entry name" value="RNase_III_sf"/>
</dbReference>
<dbReference type="NCBIfam" id="TIGR02191">
    <property type="entry name" value="RNaseIII"/>
    <property type="match status" value="1"/>
</dbReference>
<dbReference type="PANTHER" id="PTHR14950">
    <property type="entry name" value="DICER-RELATED"/>
    <property type="match status" value="1"/>
</dbReference>
<dbReference type="PANTHER" id="PTHR14950:SF37">
    <property type="entry name" value="ENDORIBONUCLEASE DICER"/>
    <property type="match status" value="1"/>
</dbReference>
<dbReference type="Pfam" id="PF00035">
    <property type="entry name" value="dsrm"/>
    <property type="match status" value="1"/>
</dbReference>
<dbReference type="Pfam" id="PF14622">
    <property type="entry name" value="Ribonucleas_3_3"/>
    <property type="match status" value="1"/>
</dbReference>
<dbReference type="SMART" id="SM00358">
    <property type="entry name" value="DSRM"/>
    <property type="match status" value="1"/>
</dbReference>
<dbReference type="SMART" id="SM00535">
    <property type="entry name" value="RIBOc"/>
    <property type="match status" value="1"/>
</dbReference>
<dbReference type="SUPFAM" id="SSF54768">
    <property type="entry name" value="dsRNA-binding domain-like"/>
    <property type="match status" value="1"/>
</dbReference>
<dbReference type="SUPFAM" id="SSF69065">
    <property type="entry name" value="RNase III domain-like"/>
    <property type="match status" value="1"/>
</dbReference>
<dbReference type="PROSITE" id="PS50137">
    <property type="entry name" value="DS_RBD"/>
    <property type="match status" value="1"/>
</dbReference>
<dbReference type="PROSITE" id="PS00517">
    <property type="entry name" value="RNASE_3_1"/>
    <property type="match status" value="1"/>
</dbReference>
<dbReference type="PROSITE" id="PS50142">
    <property type="entry name" value="RNASE_3_2"/>
    <property type="match status" value="1"/>
</dbReference>